<name>SYI_LIMRJ</name>
<reference key="1">
    <citation type="journal article" date="2008" name="DNA Res.">
        <title>Comparative genome analysis of Lactobacillus reuteri and Lactobacillus fermentum reveal a genomic island for reuterin and cobalamin production.</title>
        <authorList>
            <person name="Morita H."/>
            <person name="Toh H."/>
            <person name="Fukuda S."/>
            <person name="Horikawa H."/>
            <person name="Oshima K."/>
            <person name="Suzuki T."/>
            <person name="Murakami M."/>
            <person name="Hisamatsu S."/>
            <person name="Kato Y."/>
            <person name="Takizawa T."/>
            <person name="Fukuoka H."/>
            <person name="Yoshimura T."/>
            <person name="Itoh K."/>
            <person name="O'Sullivan D.J."/>
            <person name="McKay L.L."/>
            <person name="Ohno H."/>
            <person name="Kikuchi J."/>
            <person name="Masaoka T."/>
            <person name="Hattori M."/>
        </authorList>
    </citation>
    <scope>NUCLEOTIDE SEQUENCE [LARGE SCALE GENOMIC DNA]</scope>
    <source>
        <strain>JCM 1112</strain>
    </source>
</reference>
<evidence type="ECO:0000255" key="1">
    <source>
        <dbReference type="HAMAP-Rule" id="MF_02002"/>
    </source>
</evidence>
<feature type="chain" id="PRO_1000189176" description="Isoleucine--tRNA ligase">
    <location>
        <begin position="1"/>
        <end position="931"/>
    </location>
</feature>
<feature type="short sequence motif" description="'HIGH' region">
    <location>
        <begin position="57"/>
        <end position="67"/>
    </location>
</feature>
<feature type="short sequence motif" description="'KMSKS' region">
    <location>
        <begin position="596"/>
        <end position="600"/>
    </location>
</feature>
<feature type="binding site" evidence="1">
    <location>
        <position position="555"/>
    </location>
    <ligand>
        <name>L-isoleucyl-5'-AMP</name>
        <dbReference type="ChEBI" id="CHEBI:178002"/>
    </ligand>
</feature>
<feature type="binding site" evidence="1">
    <location>
        <position position="599"/>
    </location>
    <ligand>
        <name>ATP</name>
        <dbReference type="ChEBI" id="CHEBI:30616"/>
    </ligand>
</feature>
<feature type="binding site" evidence="1">
    <location>
        <position position="890"/>
    </location>
    <ligand>
        <name>Zn(2+)</name>
        <dbReference type="ChEBI" id="CHEBI:29105"/>
    </ligand>
</feature>
<feature type="binding site" evidence="1">
    <location>
        <position position="893"/>
    </location>
    <ligand>
        <name>Zn(2+)</name>
        <dbReference type="ChEBI" id="CHEBI:29105"/>
    </ligand>
</feature>
<feature type="binding site" evidence="1">
    <location>
        <position position="910"/>
    </location>
    <ligand>
        <name>Zn(2+)</name>
        <dbReference type="ChEBI" id="CHEBI:29105"/>
    </ligand>
</feature>
<feature type="binding site" evidence="1">
    <location>
        <position position="913"/>
    </location>
    <ligand>
        <name>Zn(2+)</name>
        <dbReference type="ChEBI" id="CHEBI:29105"/>
    </ligand>
</feature>
<proteinExistence type="inferred from homology"/>
<protein>
    <recommendedName>
        <fullName evidence="1">Isoleucine--tRNA ligase</fullName>
        <ecNumber evidence="1">6.1.1.5</ecNumber>
    </recommendedName>
    <alternativeName>
        <fullName evidence="1">Isoleucyl-tRNA synthetase</fullName>
        <shortName evidence="1">IleRS</shortName>
    </alternativeName>
</protein>
<dbReference type="EC" id="6.1.1.5" evidence="1"/>
<dbReference type="EMBL" id="AP007281">
    <property type="protein sequence ID" value="BAG25094.1"/>
    <property type="molecule type" value="Genomic_DNA"/>
</dbReference>
<dbReference type="RefSeq" id="WP_012390521.1">
    <property type="nucleotide sequence ID" value="NC_010609.1"/>
</dbReference>
<dbReference type="SMR" id="B2G6L2"/>
<dbReference type="KEGG" id="lrf:LAR_0578"/>
<dbReference type="HOGENOM" id="CLU_001493_7_1_9"/>
<dbReference type="GO" id="GO:0005829">
    <property type="term" value="C:cytosol"/>
    <property type="evidence" value="ECO:0007669"/>
    <property type="project" value="TreeGrafter"/>
</dbReference>
<dbReference type="GO" id="GO:0002161">
    <property type="term" value="F:aminoacyl-tRNA deacylase activity"/>
    <property type="evidence" value="ECO:0007669"/>
    <property type="project" value="InterPro"/>
</dbReference>
<dbReference type="GO" id="GO:0005524">
    <property type="term" value="F:ATP binding"/>
    <property type="evidence" value="ECO:0007669"/>
    <property type="project" value="UniProtKB-UniRule"/>
</dbReference>
<dbReference type="GO" id="GO:0004822">
    <property type="term" value="F:isoleucine-tRNA ligase activity"/>
    <property type="evidence" value="ECO:0007669"/>
    <property type="project" value="UniProtKB-UniRule"/>
</dbReference>
<dbReference type="GO" id="GO:0000049">
    <property type="term" value="F:tRNA binding"/>
    <property type="evidence" value="ECO:0007669"/>
    <property type="project" value="InterPro"/>
</dbReference>
<dbReference type="GO" id="GO:0008270">
    <property type="term" value="F:zinc ion binding"/>
    <property type="evidence" value="ECO:0007669"/>
    <property type="project" value="UniProtKB-UniRule"/>
</dbReference>
<dbReference type="GO" id="GO:0006428">
    <property type="term" value="P:isoleucyl-tRNA aminoacylation"/>
    <property type="evidence" value="ECO:0007669"/>
    <property type="project" value="UniProtKB-UniRule"/>
</dbReference>
<dbReference type="CDD" id="cd07960">
    <property type="entry name" value="Anticodon_Ia_Ile_BEm"/>
    <property type="match status" value="1"/>
</dbReference>
<dbReference type="CDD" id="cd00818">
    <property type="entry name" value="IleRS_core"/>
    <property type="match status" value="1"/>
</dbReference>
<dbReference type="FunFam" id="1.10.10.830:FF:000001">
    <property type="entry name" value="Isoleucine--tRNA ligase"/>
    <property type="match status" value="1"/>
</dbReference>
<dbReference type="FunFam" id="1.10.730.20:FF:000001">
    <property type="entry name" value="Isoleucine--tRNA ligase"/>
    <property type="match status" value="1"/>
</dbReference>
<dbReference type="FunFam" id="3.40.50.620:FF:000152">
    <property type="entry name" value="Isoleucine--tRNA ligase"/>
    <property type="match status" value="1"/>
</dbReference>
<dbReference type="Gene3D" id="1.10.730.20">
    <property type="match status" value="1"/>
</dbReference>
<dbReference type="Gene3D" id="3.40.50.620">
    <property type="entry name" value="HUPs"/>
    <property type="match status" value="2"/>
</dbReference>
<dbReference type="Gene3D" id="1.10.10.830">
    <property type="entry name" value="Ile-tRNA synthetase CP2 domain-like"/>
    <property type="match status" value="1"/>
</dbReference>
<dbReference type="Gene3D" id="3.90.740.10">
    <property type="entry name" value="Valyl/Leucyl/Isoleucyl-tRNA synthetase, editing domain"/>
    <property type="match status" value="1"/>
</dbReference>
<dbReference type="HAMAP" id="MF_02002">
    <property type="entry name" value="Ile_tRNA_synth_type1"/>
    <property type="match status" value="1"/>
</dbReference>
<dbReference type="InterPro" id="IPR001412">
    <property type="entry name" value="aa-tRNA-synth_I_CS"/>
</dbReference>
<dbReference type="InterPro" id="IPR002300">
    <property type="entry name" value="aa-tRNA-synth_Ia"/>
</dbReference>
<dbReference type="InterPro" id="IPR033708">
    <property type="entry name" value="Anticodon_Ile_BEm"/>
</dbReference>
<dbReference type="InterPro" id="IPR002301">
    <property type="entry name" value="Ile-tRNA-ligase"/>
</dbReference>
<dbReference type="InterPro" id="IPR023585">
    <property type="entry name" value="Ile-tRNA-ligase_type1"/>
</dbReference>
<dbReference type="InterPro" id="IPR050081">
    <property type="entry name" value="Ile-tRNA_ligase"/>
</dbReference>
<dbReference type="InterPro" id="IPR013155">
    <property type="entry name" value="M/V/L/I-tRNA-synth_anticd-bd"/>
</dbReference>
<dbReference type="InterPro" id="IPR014729">
    <property type="entry name" value="Rossmann-like_a/b/a_fold"/>
</dbReference>
<dbReference type="InterPro" id="IPR009080">
    <property type="entry name" value="tRNAsynth_Ia_anticodon-bd"/>
</dbReference>
<dbReference type="InterPro" id="IPR009008">
    <property type="entry name" value="Val/Leu/Ile-tRNA-synth_edit"/>
</dbReference>
<dbReference type="InterPro" id="IPR010663">
    <property type="entry name" value="Znf_FPG/IleRS"/>
</dbReference>
<dbReference type="NCBIfam" id="TIGR00392">
    <property type="entry name" value="ileS"/>
    <property type="match status" value="1"/>
</dbReference>
<dbReference type="PANTHER" id="PTHR42765:SF1">
    <property type="entry name" value="ISOLEUCINE--TRNA LIGASE, MITOCHONDRIAL"/>
    <property type="match status" value="1"/>
</dbReference>
<dbReference type="PANTHER" id="PTHR42765">
    <property type="entry name" value="SOLEUCYL-TRNA SYNTHETASE"/>
    <property type="match status" value="1"/>
</dbReference>
<dbReference type="Pfam" id="PF08264">
    <property type="entry name" value="Anticodon_1"/>
    <property type="match status" value="1"/>
</dbReference>
<dbReference type="Pfam" id="PF00133">
    <property type="entry name" value="tRNA-synt_1"/>
    <property type="match status" value="1"/>
</dbReference>
<dbReference type="Pfam" id="PF06827">
    <property type="entry name" value="zf-FPG_IleRS"/>
    <property type="match status" value="1"/>
</dbReference>
<dbReference type="PRINTS" id="PR00984">
    <property type="entry name" value="TRNASYNTHILE"/>
</dbReference>
<dbReference type="SUPFAM" id="SSF47323">
    <property type="entry name" value="Anticodon-binding domain of a subclass of class I aminoacyl-tRNA synthetases"/>
    <property type="match status" value="1"/>
</dbReference>
<dbReference type="SUPFAM" id="SSF52374">
    <property type="entry name" value="Nucleotidylyl transferase"/>
    <property type="match status" value="1"/>
</dbReference>
<dbReference type="SUPFAM" id="SSF50677">
    <property type="entry name" value="ValRS/IleRS/LeuRS editing domain"/>
    <property type="match status" value="1"/>
</dbReference>
<dbReference type="PROSITE" id="PS00178">
    <property type="entry name" value="AA_TRNA_LIGASE_I"/>
    <property type="match status" value="1"/>
</dbReference>
<sequence length="931" mass="106698">MRVKDTLNLGRTKFPMRGKLPVTEAQREQLWEENKVYELRQKLNEGKPTFVLHDGPPYANGNIHIGHAMNKISKDFIVRYKSMSGYRAPYVPGWDTHGLPIEHQLTKSGYDRKKMSLTEFRDLCREYALKQVDKQRTDFKRLGVSGEWDHPYLTLDKEFEAAQIRVFGEFAKKGLLYQAKKPVYWSWSSESALAEAEVEYHDVVAKTAFFVEQIKDGKGRLDNDTYLVVWTTTPWTVPASEAVAVNPKFDYSVVNPANDDRKFVVATDLLEKLAEKLGWEDYEVVDHLMGQELEGMTTQHPYLDRDLLVGLADYVTADAGTGLVHTAPGYGDDDYNFGKKYDLPIFAPINDQGVLTKENGEGFEGVFYQDADDVSLQKLEENNALLLQEPLQHSYPFDWRTKQPIIFRATDQWFVSIEKMRQNILDALEDVKYHPEWGKVRLRNMIKDRGDWVISRQRVWGVPLPIFYAEDGTPIMEEETINHVAELFAKYGSNVWFEREAKDLLPEGYTNEHSPNGKFTKETDIMDVWFDSGSSHQGVLAERDYLTYPADLYLEGSDQYRGWFNSSLITSVVCSGHAPYKEIVSQGFTLDKRGNKMSKSQGNVIDPNKVVQQMGAEIIRLWVMSADTSADVRVSMGTFQQISEAYRKLRNTFRFLLANTSDFNPEENTVSYEKLQSVDKYMLVKLNHFLKTMREDFDNYDFLDAYKVLINFVNNDLSAFYMNIAKDVLYIEAENSEVRRSMQTVFYDILLTLVKLLTPILPHTTEEVWSYMNEPEDFVQLTEIPDPRTFAGEEELLSKWDDFMEVRSHVLKSLEEARNAKLIGKSLEAQVDLYLTDDQKQLLDSLNENIQLLLGVSALHVHPADEAPADADQYNDGVAVKVTTANGETCARCRMVKEDVGSDPAYPELCARCAAIVRENFPETAEDGLEE</sequence>
<keyword id="KW-0030">Aminoacyl-tRNA synthetase</keyword>
<keyword id="KW-0067">ATP-binding</keyword>
<keyword id="KW-0963">Cytoplasm</keyword>
<keyword id="KW-0436">Ligase</keyword>
<keyword id="KW-0479">Metal-binding</keyword>
<keyword id="KW-0547">Nucleotide-binding</keyword>
<keyword id="KW-0648">Protein biosynthesis</keyword>
<keyword id="KW-0862">Zinc</keyword>
<comment type="function">
    <text evidence="1">Catalyzes the attachment of isoleucine to tRNA(Ile). As IleRS can inadvertently accommodate and process structurally similar amino acids such as valine, to avoid such errors it has two additional distinct tRNA(Ile)-dependent editing activities. One activity is designated as 'pretransfer' editing and involves the hydrolysis of activated Val-AMP. The other activity is designated 'posttransfer' editing and involves deacylation of mischarged Val-tRNA(Ile).</text>
</comment>
<comment type="catalytic activity">
    <reaction evidence="1">
        <text>tRNA(Ile) + L-isoleucine + ATP = L-isoleucyl-tRNA(Ile) + AMP + diphosphate</text>
        <dbReference type="Rhea" id="RHEA:11060"/>
        <dbReference type="Rhea" id="RHEA-COMP:9666"/>
        <dbReference type="Rhea" id="RHEA-COMP:9695"/>
        <dbReference type="ChEBI" id="CHEBI:30616"/>
        <dbReference type="ChEBI" id="CHEBI:33019"/>
        <dbReference type="ChEBI" id="CHEBI:58045"/>
        <dbReference type="ChEBI" id="CHEBI:78442"/>
        <dbReference type="ChEBI" id="CHEBI:78528"/>
        <dbReference type="ChEBI" id="CHEBI:456215"/>
        <dbReference type="EC" id="6.1.1.5"/>
    </reaction>
</comment>
<comment type="cofactor">
    <cofactor evidence="1">
        <name>Zn(2+)</name>
        <dbReference type="ChEBI" id="CHEBI:29105"/>
    </cofactor>
    <text evidence="1">Binds 1 zinc ion per subunit.</text>
</comment>
<comment type="subunit">
    <text evidence="1">Monomer.</text>
</comment>
<comment type="subcellular location">
    <subcellularLocation>
        <location evidence="1">Cytoplasm</location>
    </subcellularLocation>
</comment>
<comment type="domain">
    <text evidence="1">IleRS has two distinct active sites: one for aminoacylation and one for editing. The misactivated valine is translocated from the active site to the editing site, which sterically excludes the correctly activated isoleucine. The single editing site contains two valyl binding pockets, one specific for each substrate (Val-AMP or Val-tRNA(Ile)).</text>
</comment>
<comment type="similarity">
    <text evidence="1">Belongs to the class-I aminoacyl-tRNA synthetase family. IleS type 1 subfamily.</text>
</comment>
<gene>
    <name evidence="1" type="primary">ileS</name>
    <name type="ordered locus">LAR_0578</name>
</gene>
<accession>B2G6L2</accession>
<organism>
    <name type="scientific">Limosilactobacillus reuteri subsp. reuteri (strain JCM 1112)</name>
    <name type="common">Lactobacillus reuteri</name>
    <dbReference type="NCBI Taxonomy" id="557433"/>
    <lineage>
        <taxon>Bacteria</taxon>
        <taxon>Bacillati</taxon>
        <taxon>Bacillota</taxon>
        <taxon>Bacilli</taxon>
        <taxon>Lactobacillales</taxon>
        <taxon>Lactobacillaceae</taxon>
        <taxon>Limosilactobacillus</taxon>
    </lineage>
</organism>